<sequence length="217" mass="25368">MSKSKMIVRTKFIDRACHWTVVICFFLVALSGISFFFPTLQWLTQTFGTPQMGRILHPFFGIAIFVALMFMFVRFVHHNIPDKKDIPWLLNIVEVLKGNEHKVADVGKYNAGQKMMFWSIMSMIFVLLVTGVIIWRPYFAQYFPMQVVRYSLLIHAAAGIILIHAILIHMYMAFWVKGSIKGMIEGKVSRRWAKKHHPRWYREIEKAEAKKESEEGI</sequence>
<comment type="function">
    <text evidence="1">Formate dehydrogenase allows the bacterium to use formate as major electron donor during anaerobic respiration, when nitrate is used as electron acceptor. Subunit gamma is the cytochrome b556 component of the formate dehydrogenase-N, and also contains a menaquinone reduction site that receives electrons from the beta subunit (FdnH), through its hemes. Formate dehydrogenase-N is part of a system that generates proton motive force, together with the dissimilatory nitrate reductase (Nar) (By similarity).</text>
</comment>
<comment type="cofactor">
    <cofactor evidence="1">
        <name>heme</name>
        <dbReference type="ChEBI" id="CHEBI:30413"/>
    </cofactor>
    <text evidence="1">Binds 2 heme groups per subunit. Heme 1 is located at the cytoplasmic interface, heme 2 is located at the periplasmic interface. Electrons are transferred from the periplasmic to the cytoplasmic heme.</text>
</comment>
<comment type="subunit">
    <text evidence="1">Trimer of heterotrimers, consisting of subunits alpha, beta and gamma.</text>
</comment>
<comment type="subcellular location">
    <subcellularLocation>
        <location evidence="1">Cell inner membrane</location>
        <topology evidence="1">Multi-pass membrane protein</topology>
    </subcellularLocation>
</comment>
<comment type="similarity">
    <text evidence="2">Belongs to the formate dehydrogenase gamma subunit family.</text>
</comment>
<organism>
    <name type="scientific">Escherichia coli O157:H7</name>
    <dbReference type="NCBI Taxonomy" id="83334"/>
    <lineage>
        <taxon>Bacteria</taxon>
        <taxon>Pseudomonadati</taxon>
        <taxon>Pseudomonadota</taxon>
        <taxon>Gammaproteobacteria</taxon>
        <taxon>Enterobacterales</taxon>
        <taxon>Enterobacteriaceae</taxon>
        <taxon>Escherichia</taxon>
    </lineage>
</organism>
<gene>
    <name type="primary">fdnI</name>
    <name type="ordered locus">Z2234</name>
    <name type="ordered locus">ECs2080</name>
</gene>
<feature type="chain" id="PRO_0000087211" description="Formate dehydrogenase, nitrate-inducible, cytochrome b556(Fdn) subunit">
    <location>
        <begin position="1"/>
        <end position="217"/>
    </location>
</feature>
<feature type="topological domain" description="Cytoplasmic" evidence="1">
    <location>
        <begin position="1"/>
        <end position="11"/>
    </location>
</feature>
<feature type="transmembrane region" description="Helical" evidence="1">
    <location>
        <begin position="12"/>
        <end position="36"/>
    </location>
</feature>
<feature type="topological domain" description="Periplasmic" evidence="1">
    <location>
        <begin position="37"/>
        <end position="52"/>
    </location>
</feature>
<feature type="transmembrane region" description="Helical" evidence="1">
    <location>
        <begin position="53"/>
        <end position="74"/>
    </location>
</feature>
<feature type="topological domain" description="Cytoplasmic" evidence="1">
    <location>
        <begin position="75"/>
        <end position="110"/>
    </location>
</feature>
<feature type="transmembrane region" description="Helical" evidence="1">
    <location>
        <begin position="111"/>
        <end position="134"/>
    </location>
</feature>
<feature type="topological domain" description="Periplasmic" evidence="1">
    <location>
        <begin position="135"/>
        <end position="150"/>
    </location>
</feature>
<feature type="transmembrane region" description="Helical" evidence="1">
    <location>
        <begin position="151"/>
        <end position="175"/>
    </location>
</feature>
<feature type="topological domain" description="Cytoplasmic" evidence="1">
    <location>
        <begin position="176"/>
        <end position="217"/>
    </location>
</feature>
<feature type="binding site" description="axial binding residue" evidence="1">
    <location>
        <position position="18"/>
    </location>
    <ligand>
        <name>heme b</name>
        <dbReference type="ChEBI" id="CHEBI:60344"/>
        <label>1</label>
    </ligand>
    <ligandPart>
        <name>Fe</name>
        <dbReference type="ChEBI" id="CHEBI:18248"/>
    </ligandPart>
</feature>
<feature type="binding site" description="axial binding residue" evidence="1">
    <location>
        <position position="57"/>
    </location>
    <ligand>
        <name>heme b</name>
        <dbReference type="ChEBI" id="CHEBI:60344"/>
        <label>2</label>
    </ligand>
    <ligandPart>
        <name>Fe</name>
        <dbReference type="ChEBI" id="CHEBI:18248"/>
    </ligandPart>
</feature>
<feature type="binding site" description="axial binding residue" evidence="1">
    <location>
        <position position="155"/>
    </location>
    <ligand>
        <name>heme b</name>
        <dbReference type="ChEBI" id="CHEBI:60344"/>
        <label>2</label>
    </ligand>
    <ligandPart>
        <name>Fe</name>
        <dbReference type="ChEBI" id="CHEBI:18248"/>
    </ligandPart>
</feature>
<feature type="binding site" evidence="1">
    <location>
        <position position="169"/>
    </location>
    <ligand>
        <name>a menaquinone</name>
        <dbReference type="ChEBI" id="CHEBI:16374"/>
    </ligand>
</feature>
<feature type="binding site" description="axial binding residue" evidence="1">
    <location>
        <position position="169"/>
    </location>
    <ligand>
        <name>heme b</name>
        <dbReference type="ChEBI" id="CHEBI:60344"/>
        <label>1</label>
    </ligand>
    <ligandPart>
        <name>Fe</name>
        <dbReference type="ChEBI" id="CHEBI:18248"/>
    </ligandPart>
</feature>
<evidence type="ECO:0000250" key="1"/>
<evidence type="ECO:0000305" key="2"/>
<keyword id="KW-0997">Cell inner membrane</keyword>
<keyword id="KW-1003">Cell membrane</keyword>
<keyword id="KW-0249">Electron transport</keyword>
<keyword id="KW-0349">Heme</keyword>
<keyword id="KW-0408">Iron</keyword>
<keyword id="KW-0472">Membrane</keyword>
<keyword id="KW-0479">Metal-binding</keyword>
<keyword id="KW-1185">Reference proteome</keyword>
<keyword id="KW-0812">Transmembrane</keyword>
<keyword id="KW-1133">Transmembrane helix</keyword>
<keyword id="KW-0813">Transport</keyword>
<proteinExistence type="inferred from homology"/>
<reference key="1">
    <citation type="journal article" date="2001" name="Nature">
        <title>Genome sequence of enterohaemorrhagic Escherichia coli O157:H7.</title>
        <authorList>
            <person name="Perna N.T."/>
            <person name="Plunkett G. III"/>
            <person name="Burland V."/>
            <person name="Mau B."/>
            <person name="Glasner J.D."/>
            <person name="Rose D.J."/>
            <person name="Mayhew G.F."/>
            <person name="Evans P.S."/>
            <person name="Gregor J."/>
            <person name="Kirkpatrick H.A."/>
            <person name="Posfai G."/>
            <person name="Hackett J."/>
            <person name="Klink S."/>
            <person name="Boutin A."/>
            <person name="Shao Y."/>
            <person name="Miller L."/>
            <person name="Grotbeck E.J."/>
            <person name="Davis N.W."/>
            <person name="Lim A."/>
            <person name="Dimalanta E.T."/>
            <person name="Potamousis K."/>
            <person name="Apodaca J."/>
            <person name="Anantharaman T.S."/>
            <person name="Lin J."/>
            <person name="Yen G."/>
            <person name="Schwartz D.C."/>
            <person name="Welch R.A."/>
            <person name="Blattner F.R."/>
        </authorList>
    </citation>
    <scope>NUCLEOTIDE SEQUENCE [LARGE SCALE GENOMIC DNA]</scope>
    <source>
        <strain>O157:H7 / EDL933 / ATCC 700927 / EHEC</strain>
    </source>
</reference>
<reference key="2">
    <citation type="journal article" date="2001" name="DNA Res.">
        <title>Complete genome sequence of enterohemorrhagic Escherichia coli O157:H7 and genomic comparison with a laboratory strain K-12.</title>
        <authorList>
            <person name="Hayashi T."/>
            <person name="Makino K."/>
            <person name="Ohnishi M."/>
            <person name="Kurokawa K."/>
            <person name="Ishii K."/>
            <person name="Yokoyama K."/>
            <person name="Han C.-G."/>
            <person name="Ohtsubo E."/>
            <person name="Nakayama K."/>
            <person name="Murata T."/>
            <person name="Tanaka M."/>
            <person name="Tobe T."/>
            <person name="Iida T."/>
            <person name="Takami H."/>
            <person name="Honda T."/>
            <person name="Sasakawa C."/>
            <person name="Ogasawara N."/>
            <person name="Yasunaga T."/>
            <person name="Kuhara S."/>
            <person name="Shiba T."/>
            <person name="Hattori M."/>
            <person name="Shinagawa H."/>
        </authorList>
    </citation>
    <scope>NUCLEOTIDE SEQUENCE [LARGE SCALE GENOMIC DNA]</scope>
    <source>
        <strain>O157:H7 / Sakai / RIMD 0509952 / EHEC</strain>
    </source>
</reference>
<accession>P0AEK8</accession>
<accession>P24185</accession>
<accession>P77513</accession>
<name>FDNI_ECO57</name>
<dbReference type="EMBL" id="AE005174">
    <property type="protein sequence ID" value="AAG56293.1"/>
    <property type="molecule type" value="Genomic_DNA"/>
</dbReference>
<dbReference type="EMBL" id="BA000007">
    <property type="protein sequence ID" value="BAB35503.1"/>
    <property type="molecule type" value="Genomic_DNA"/>
</dbReference>
<dbReference type="PIR" id="A85729">
    <property type="entry name" value="A85729"/>
</dbReference>
<dbReference type="PIR" id="H90888">
    <property type="entry name" value="H90888"/>
</dbReference>
<dbReference type="RefSeq" id="NP_310107.1">
    <property type="nucleotide sequence ID" value="NC_002695.1"/>
</dbReference>
<dbReference type="RefSeq" id="WP_000045648.1">
    <property type="nucleotide sequence ID" value="NZ_VOAI01000034.1"/>
</dbReference>
<dbReference type="SMR" id="P0AEK8"/>
<dbReference type="STRING" id="155864.Z2234"/>
<dbReference type="GeneID" id="917301"/>
<dbReference type="GeneID" id="93775635"/>
<dbReference type="KEGG" id="ece:Z2234"/>
<dbReference type="KEGG" id="ecs:ECs_2080"/>
<dbReference type="PATRIC" id="fig|386585.9.peg.2185"/>
<dbReference type="eggNOG" id="COG2864">
    <property type="taxonomic scope" value="Bacteria"/>
</dbReference>
<dbReference type="HOGENOM" id="CLU_091368_1_1_6"/>
<dbReference type="OMA" id="TIMSMIF"/>
<dbReference type="Proteomes" id="UP000000558">
    <property type="component" value="Chromosome"/>
</dbReference>
<dbReference type="Proteomes" id="UP000002519">
    <property type="component" value="Chromosome"/>
</dbReference>
<dbReference type="GO" id="GO:0009326">
    <property type="term" value="C:formate dehydrogenase complex"/>
    <property type="evidence" value="ECO:0007669"/>
    <property type="project" value="InterPro"/>
</dbReference>
<dbReference type="GO" id="GO:0005886">
    <property type="term" value="C:plasma membrane"/>
    <property type="evidence" value="ECO:0007669"/>
    <property type="project" value="UniProtKB-SubCell"/>
</dbReference>
<dbReference type="GO" id="GO:0009055">
    <property type="term" value="F:electron transfer activity"/>
    <property type="evidence" value="ECO:0007669"/>
    <property type="project" value="InterPro"/>
</dbReference>
<dbReference type="GO" id="GO:0008863">
    <property type="term" value="F:formate dehydrogenase (NAD+) activity"/>
    <property type="evidence" value="ECO:0007669"/>
    <property type="project" value="InterPro"/>
</dbReference>
<dbReference type="GO" id="GO:0036397">
    <property type="term" value="F:formate dehydrogenase (quinone) activity"/>
    <property type="evidence" value="ECO:0007669"/>
    <property type="project" value="TreeGrafter"/>
</dbReference>
<dbReference type="GO" id="GO:0046872">
    <property type="term" value="F:metal ion binding"/>
    <property type="evidence" value="ECO:0007669"/>
    <property type="project" value="UniProtKB-KW"/>
</dbReference>
<dbReference type="GO" id="GO:0009061">
    <property type="term" value="P:anaerobic respiration"/>
    <property type="evidence" value="ECO:0007669"/>
    <property type="project" value="TreeGrafter"/>
</dbReference>
<dbReference type="GO" id="GO:0015944">
    <property type="term" value="P:formate oxidation"/>
    <property type="evidence" value="ECO:0007669"/>
    <property type="project" value="TreeGrafter"/>
</dbReference>
<dbReference type="GO" id="GO:0022904">
    <property type="term" value="P:respiratory electron transport chain"/>
    <property type="evidence" value="ECO:0007669"/>
    <property type="project" value="InterPro"/>
</dbReference>
<dbReference type="FunFam" id="1.20.950.20:FF:000002">
    <property type="entry name" value="Formate dehydrogenase cytochrome b556 subunit"/>
    <property type="match status" value="1"/>
</dbReference>
<dbReference type="Gene3D" id="1.20.950.20">
    <property type="entry name" value="Transmembrane di-heme cytochromes, Chain C"/>
    <property type="match status" value="1"/>
</dbReference>
<dbReference type="InterPro" id="IPR011577">
    <property type="entry name" value="Cyt_b561_bac/Ni-Hgenase"/>
</dbReference>
<dbReference type="InterPro" id="IPR016174">
    <property type="entry name" value="Di-haem_cyt_TM"/>
</dbReference>
<dbReference type="InterPro" id="IPR051817">
    <property type="entry name" value="FDH_cytochrome_b556_subunit"/>
</dbReference>
<dbReference type="InterPro" id="IPR006471">
    <property type="entry name" value="Formate_DH_gsu"/>
</dbReference>
<dbReference type="NCBIfam" id="TIGR01583">
    <property type="entry name" value="formate-DH-gamm"/>
    <property type="match status" value="1"/>
</dbReference>
<dbReference type="NCBIfam" id="NF007558">
    <property type="entry name" value="PRK10179.1"/>
    <property type="match status" value="1"/>
</dbReference>
<dbReference type="PANTHER" id="PTHR30074">
    <property type="entry name" value="FORMATE DEHYDROGENASE, NITRATE-INDUCIBLE, CYTOCHROME B556 FDN SUBUNIT"/>
    <property type="match status" value="1"/>
</dbReference>
<dbReference type="PANTHER" id="PTHR30074:SF5">
    <property type="entry name" value="FORMATE DEHYDROGENASE, NITRATE-INDUCIBLE, CYTOCHROME B556(FDN) SUBUNIT"/>
    <property type="match status" value="1"/>
</dbReference>
<dbReference type="Pfam" id="PF01292">
    <property type="entry name" value="Ni_hydr_CYTB"/>
    <property type="match status" value="1"/>
</dbReference>
<dbReference type="SUPFAM" id="SSF81342">
    <property type="entry name" value="Transmembrane di-heme cytochromes"/>
    <property type="match status" value="1"/>
</dbReference>
<protein>
    <recommendedName>
        <fullName>Formate dehydrogenase, nitrate-inducible, cytochrome b556(Fdn) subunit</fullName>
    </recommendedName>
    <alternativeName>
        <fullName>Anaerobic formate dehydrogenase cytochrome b556 subunit</fullName>
    </alternativeName>
    <alternativeName>
        <fullName>Formate dehydrogenase-N subunit gamma</fullName>
        <shortName>FDH-N subunit gamma</shortName>
    </alternativeName>
</protein>